<organism>
    <name type="scientific">Homo sapiens</name>
    <name type="common">Human</name>
    <dbReference type="NCBI Taxonomy" id="9606"/>
    <lineage>
        <taxon>Eukaryota</taxon>
        <taxon>Metazoa</taxon>
        <taxon>Chordata</taxon>
        <taxon>Craniata</taxon>
        <taxon>Vertebrata</taxon>
        <taxon>Euteleostomi</taxon>
        <taxon>Mammalia</taxon>
        <taxon>Eutheria</taxon>
        <taxon>Euarchontoglires</taxon>
        <taxon>Primates</taxon>
        <taxon>Haplorrhini</taxon>
        <taxon>Catarrhini</taxon>
        <taxon>Hominidae</taxon>
        <taxon>Homo</taxon>
    </lineage>
</organism>
<reference key="1">
    <citation type="journal article" date="1994" name="J. Biol. Chem.">
        <title>Determination of the amino acid sequence of rabbit, human, and wheat germ protein synthesis factor eIF-4C by cloning and chemical sequencing.</title>
        <authorList>
            <person name="Dever T.E."/>
            <person name="Wei C.-L."/>
            <person name="Benkowski L.A."/>
            <person name="Browning K."/>
            <person name="Merrick W.C."/>
            <person name="Hershey J.W.B."/>
        </authorList>
    </citation>
    <scope>NUCLEOTIDE SEQUENCE [MRNA]</scope>
</reference>
<reference key="2">
    <citation type="journal article" date="2004" name="Nat. Genet.">
        <title>Complete sequencing and characterization of 21,243 full-length human cDNAs.</title>
        <authorList>
            <person name="Ota T."/>
            <person name="Suzuki Y."/>
            <person name="Nishikawa T."/>
            <person name="Otsuki T."/>
            <person name="Sugiyama T."/>
            <person name="Irie R."/>
            <person name="Wakamatsu A."/>
            <person name="Hayashi K."/>
            <person name="Sato H."/>
            <person name="Nagai K."/>
            <person name="Kimura K."/>
            <person name="Makita H."/>
            <person name="Sekine M."/>
            <person name="Obayashi M."/>
            <person name="Nishi T."/>
            <person name="Shibahara T."/>
            <person name="Tanaka T."/>
            <person name="Ishii S."/>
            <person name="Yamamoto J."/>
            <person name="Saito K."/>
            <person name="Kawai Y."/>
            <person name="Isono Y."/>
            <person name="Nakamura Y."/>
            <person name="Nagahari K."/>
            <person name="Murakami K."/>
            <person name="Yasuda T."/>
            <person name="Iwayanagi T."/>
            <person name="Wagatsuma M."/>
            <person name="Shiratori A."/>
            <person name="Sudo H."/>
            <person name="Hosoiri T."/>
            <person name="Kaku Y."/>
            <person name="Kodaira H."/>
            <person name="Kondo H."/>
            <person name="Sugawara M."/>
            <person name="Takahashi M."/>
            <person name="Kanda K."/>
            <person name="Yokoi T."/>
            <person name="Furuya T."/>
            <person name="Kikkawa E."/>
            <person name="Omura Y."/>
            <person name="Abe K."/>
            <person name="Kamihara K."/>
            <person name="Katsuta N."/>
            <person name="Sato K."/>
            <person name="Tanikawa M."/>
            <person name="Yamazaki M."/>
            <person name="Ninomiya K."/>
            <person name="Ishibashi T."/>
            <person name="Yamashita H."/>
            <person name="Murakawa K."/>
            <person name="Fujimori K."/>
            <person name="Tanai H."/>
            <person name="Kimata M."/>
            <person name="Watanabe M."/>
            <person name="Hiraoka S."/>
            <person name="Chiba Y."/>
            <person name="Ishida S."/>
            <person name="Ono Y."/>
            <person name="Takiguchi S."/>
            <person name="Watanabe S."/>
            <person name="Yosida M."/>
            <person name="Hotuta T."/>
            <person name="Kusano J."/>
            <person name="Kanehori K."/>
            <person name="Takahashi-Fujii A."/>
            <person name="Hara H."/>
            <person name="Tanase T.-O."/>
            <person name="Nomura Y."/>
            <person name="Togiya S."/>
            <person name="Komai F."/>
            <person name="Hara R."/>
            <person name="Takeuchi K."/>
            <person name="Arita M."/>
            <person name="Imose N."/>
            <person name="Musashino K."/>
            <person name="Yuuki H."/>
            <person name="Oshima A."/>
            <person name="Sasaki N."/>
            <person name="Aotsuka S."/>
            <person name="Yoshikawa Y."/>
            <person name="Matsunawa H."/>
            <person name="Ichihara T."/>
            <person name="Shiohata N."/>
            <person name="Sano S."/>
            <person name="Moriya S."/>
            <person name="Momiyama H."/>
            <person name="Satoh N."/>
            <person name="Takami S."/>
            <person name="Terashima Y."/>
            <person name="Suzuki O."/>
            <person name="Nakagawa S."/>
            <person name="Senoh A."/>
            <person name="Mizoguchi H."/>
            <person name="Goto Y."/>
            <person name="Shimizu F."/>
            <person name="Wakebe H."/>
            <person name="Hishigaki H."/>
            <person name="Watanabe T."/>
            <person name="Sugiyama A."/>
            <person name="Takemoto M."/>
            <person name="Kawakami B."/>
            <person name="Yamazaki M."/>
            <person name="Watanabe K."/>
            <person name="Kumagai A."/>
            <person name="Itakura S."/>
            <person name="Fukuzumi Y."/>
            <person name="Fujimori Y."/>
            <person name="Komiyama M."/>
            <person name="Tashiro H."/>
            <person name="Tanigami A."/>
            <person name="Fujiwara T."/>
            <person name="Ono T."/>
            <person name="Yamada K."/>
            <person name="Fujii Y."/>
            <person name="Ozaki K."/>
            <person name="Hirao M."/>
            <person name="Ohmori Y."/>
            <person name="Kawabata A."/>
            <person name="Hikiji T."/>
            <person name="Kobatake N."/>
            <person name="Inagaki H."/>
            <person name="Ikema Y."/>
            <person name="Okamoto S."/>
            <person name="Okitani R."/>
            <person name="Kawakami T."/>
            <person name="Noguchi S."/>
            <person name="Itoh T."/>
            <person name="Shigeta K."/>
            <person name="Senba T."/>
            <person name="Matsumura K."/>
            <person name="Nakajima Y."/>
            <person name="Mizuno T."/>
            <person name="Morinaga M."/>
            <person name="Sasaki M."/>
            <person name="Togashi T."/>
            <person name="Oyama M."/>
            <person name="Hata H."/>
            <person name="Watanabe M."/>
            <person name="Komatsu T."/>
            <person name="Mizushima-Sugano J."/>
            <person name="Satoh T."/>
            <person name="Shirai Y."/>
            <person name="Takahashi Y."/>
            <person name="Nakagawa K."/>
            <person name="Okumura K."/>
            <person name="Nagase T."/>
            <person name="Nomura N."/>
            <person name="Kikuchi H."/>
            <person name="Masuho Y."/>
            <person name="Yamashita R."/>
            <person name="Nakai K."/>
            <person name="Yada T."/>
            <person name="Nakamura Y."/>
            <person name="Ohara O."/>
            <person name="Isogai T."/>
            <person name="Sugano S."/>
        </authorList>
    </citation>
    <scope>NUCLEOTIDE SEQUENCE [LARGE SCALE MRNA]</scope>
    <source>
        <tissue>Cerebellum</tissue>
    </source>
</reference>
<reference key="3">
    <citation type="submission" date="2003-05" db="EMBL/GenBank/DDBJ databases">
        <title>Cloning of human full-length CDSs in BD Creator(TM) system donor vector.</title>
        <authorList>
            <person name="Kalnine N."/>
            <person name="Chen X."/>
            <person name="Rolfs A."/>
            <person name="Halleck A."/>
            <person name="Hines L."/>
            <person name="Eisenstein S."/>
            <person name="Koundinya M."/>
            <person name="Raphael J."/>
            <person name="Moreira D."/>
            <person name="Kelley T."/>
            <person name="LaBaer J."/>
            <person name="Lin Y."/>
            <person name="Phelan M."/>
            <person name="Farmer A."/>
        </authorList>
    </citation>
    <scope>NUCLEOTIDE SEQUENCE [LARGE SCALE MRNA]</scope>
</reference>
<reference key="4">
    <citation type="journal article" date="2005" name="Nature">
        <title>The DNA sequence of the human X chromosome.</title>
        <authorList>
            <person name="Ross M.T."/>
            <person name="Grafham D.V."/>
            <person name="Coffey A.J."/>
            <person name="Scherer S."/>
            <person name="McLay K."/>
            <person name="Muzny D."/>
            <person name="Platzer M."/>
            <person name="Howell G.R."/>
            <person name="Burrows C."/>
            <person name="Bird C.P."/>
            <person name="Frankish A."/>
            <person name="Lovell F.L."/>
            <person name="Howe K.L."/>
            <person name="Ashurst J.L."/>
            <person name="Fulton R.S."/>
            <person name="Sudbrak R."/>
            <person name="Wen G."/>
            <person name="Jones M.C."/>
            <person name="Hurles M.E."/>
            <person name="Andrews T.D."/>
            <person name="Scott C.E."/>
            <person name="Searle S."/>
            <person name="Ramser J."/>
            <person name="Whittaker A."/>
            <person name="Deadman R."/>
            <person name="Carter N.P."/>
            <person name="Hunt S.E."/>
            <person name="Chen R."/>
            <person name="Cree A."/>
            <person name="Gunaratne P."/>
            <person name="Havlak P."/>
            <person name="Hodgson A."/>
            <person name="Metzker M.L."/>
            <person name="Richards S."/>
            <person name="Scott G."/>
            <person name="Steffen D."/>
            <person name="Sodergren E."/>
            <person name="Wheeler D.A."/>
            <person name="Worley K.C."/>
            <person name="Ainscough R."/>
            <person name="Ambrose K.D."/>
            <person name="Ansari-Lari M.A."/>
            <person name="Aradhya S."/>
            <person name="Ashwell R.I."/>
            <person name="Babbage A.K."/>
            <person name="Bagguley C.L."/>
            <person name="Ballabio A."/>
            <person name="Banerjee R."/>
            <person name="Barker G.E."/>
            <person name="Barlow K.F."/>
            <person name="Barrett I.P."/>
            <person name="Bates K.N."/>
            <person name="Beare D.M."/>
            <person name="Beasley H."/>
            <person name="Beasley O."/>
            <person name="Beck A."/>
            <person name="Bethel G."/>
            <person name="Blechschmidt K."/>
            <person name="Brady N."/>
            <person name="Bray-Allen S."/>
            <person name="Bridgeman A.M."/>
            <person name="Brown A.J."/>
            <person name="Brown M.J."/>
            <person name="Bonnin D."/>
            <person name="Bruford E.A."/>
            <person name="Buhay C."/>
            <person name="Burch P."/>
            <person name="Burford D."/>
            <person name="Burgess J."/>
            <person name="Burrill W."/>
            <person name="Burton J."/>
            <person name="Bye J.M."/>
            <person name="Carder C."/>
            <person name="Carrel L."/>
            <person name="Chako J."/>
            <person name="Chapman J.C."/>
            <person name="Chavez D."/>
            <person name="Chen E."/>
            <person name="Chen G."/>
            <person name="Chen Y."/>
            <person name="Chen Z."/>
            <person name="Chinault C."/>
            <person name="Ciccodicola A."/>
            <person name="Clark S.Y."/>
            <person name="Clarke G."/>
            <person name="Clee C.M."/>
            <person name="Clegg S."/>
            <person name="Clerc-Blankenburg K."/>
            <person name="Clifford K."/>
            <person name="Cobley V."/>
            <person name="Cole C.G."/>
            <person name="Conquer J.S."/>
            <person name="Corby N."/>
            <person name="Connor R.E."/>
            <person name="David R."/>
            <person name="Davies J."/>
            <person name="Davis C."/>
            <person name="Davis J."/>
            <person name="Delgado O."/>
            <person name="Deshazo D."/>
            <person name="Dhami P."/>
            <person name="Ding Y."/>
            <person name="Dinh H."/>
            <person name="Dodsworth S."/>
            <person name="Draper H."/>
            <person name="Dugan-Rocha S."/>
            <person name="Dunham A."/>
            <person name="Dunn M."/>
            <person name="Durbin K.J."/>
            <person name="Dutta I."/>
            <person name="Eades T."/>
            <person name="Ellwood M."/>
            <person name="Emery-Cohen A."/>
            <person name="Errington H."/>
            <person name="Evans K.L."/>
            <person name="Faulkner L."/>
            <person name="Francis F."/>
            <person name="Frankland J."/>
            <person name="Fraser A.E."/>
            <person name="Galgoczy P."/>
            <person name="Gilbert J."/>
            <person name="Gill R."/>
            <person name="Gloeckner G."/>
            <person name="Gregory S.G."/>
            <person name="Gribble S."/>
            <person name="Griffiths C."/>
            <person name="Grocock R."/>
            <person name="Gu Y."/>
            <person name="Gwilliam R."/>
            <person name="Hamilton C."/>
            <person name="Hart E.A."/>
            <person name="Hawes A."/>
            <person name="Heath P.D."/>
            <person name="Heitmann K."/>
            <person name="Hennig S."/>
            <person name="Hernandez J."/>
            <person name="Hinzmann B."/>
            <person name="Ho S."/>
            <person name="Hoffs M."/>
            <person name="Howden P.J."/>
            <person name="Huckle E.J."/>
            <person name="Hume J."/>
            <person name="Hunt P.J."/>
            <person name="Hunt A.R."/>
            <person name="Isherwood J."/>
            <person name="Jacob L."/>
            <person name="Johnson D."/>
            <person name="Jones S."/>
            <person name="de Jong P.J."/>
            <person name="Joseph S.S."/>
            <person name="Keenan S."/>
            <person name="Kelly S."/>
            <person name="Kershaw J.K."/>
            <person name="Khan Z."/>
            <person name="Kioschis P."/>
            <person name="Klages S."/>
            <person name="Knights A.J."/>
            <person name="Kosiura A."/>
            <person name="Kovar-Smith C."/>
            <person name="Laird G.K."/>
            <person name="Langford C."/>
            <person name="Lawlor S."/>
            <person name="Leversha M."/>
            <person name="Lewis L."/>
            <person name="Liu W."/>
            <person name="Lloyd C."/>
            <person name="Lloyd D.M."/>
            <person name="Loulseged H."/>
            <person name="Loveland J.E."/>
            <person name="Lovell J.D."/>
            <person name="Lozado R."/>
            <person name="Lu J."/>
            <person name="Lyne R."/>
            <person name="Ma J."/>
            <person name="Maheshwari M."/>
            <person name="Matthews L.H."/>
            <person name="McDowall J."/>
            <person name="McLaren S."/>
            <person name="McMurray A."/>
            <person name="Meidl P."/>
            <person name="Meitinger T."/>
            <person name="Milne S."/>
            <person name="Miner G."/>
            <person name="Mistry S.L."/>
            <person name="Morgan M."/>
            <person name="Morris S."/>
            <person name="Mueller I."/>
            <person name="Mullikin J.C."/>
            <person name="Nguyen N."/>
            <person name="Nordsiek G."/>
            <person name="Nyakatura G."/>
            <person name="O'dell C.N."/>
            <person name="Okwuonu G."/>
            <person name="Palmer S."/>
            <person name="Pandian R."/>
            <person name="Parker D."/>
            <person name="Parrish J."/>
            <person name="Pasternak S."/>
            <person name="Patel D."/>
            <person name="Pearce A.V."/>
            <person name="Pearson D.M."/>
            <person name="Pelan S.E."/>
            <person name="Perez L."/>
            <person name="Porter K.M."/>
            <person name="Ramsey Y."/>
            <person name="Reichwald K."/>
            <person name="Rhodes S."/>
            <person name="Ridler K.A."/>
            <person name="Schlessinger D."/>
            <person name="Schueler M.G."/>
            <person name="Sehra H.K."/>
            <person name="Shaw-Smith C."/>
            <person name="Shen H."/>
            <person name="Sheridan E.M."/>
            <person name="Shownkeen R."/>
            <person name="Skuce C.D."/>
            <person name="Smith M.L."/>
            <person name="Sotheran E.C."/>
            <person name="Steingruber H.E."/>
            <person name="Steward C.A."/>
            <person name="Storey R."/>
            <person name="Swann R.M."/>
            <person name="Swarbreck D."/>
            <person name="Tabor P.E."/>
            <person name="Taudien S."/>
            <person name="Taylor T."/>
            <person name="Teague B."/>
            <person name="Thomas K."/>
            <person name="Thorpe A."/>
            <person name="Timms K."/>
            <person name="Tracey A."/>
            <person name="Trevanion S."/>
            <person name="Tromans A.C."/>
            <person name="d'Urso M."/>
            <person name="Verduzco D."/>
            <person name="Villasana D."/>
            <person name="Waldron L."/>
            <person name="Wall M."/>
            <person name="Wang Q."/>
            <person name="Warren J."/>
            <person name="Warry G.L."/>
            <person name="Wei X."/>
            <person name="West A."/>
            <person name="Whitehead S.L."/>
            <person name="Whiteley M.N."/>
            <person name="Wilkinson J.E."/>
            <person name="Willey D.L."/>
            <person name="Williams G."/>
            <person name="Williams L."/>
            <person name="Williamson A."/>
            <person name="Williamson H."/>
            <person name="Wilming L."/>
            <person name="Woodmansey R.L."/>
            <person name="Wray P.W."/>
            <person name="Yen J."/>
            <person name="Zhang J."/>
            <person name="Zhou J."/>
            <person name="Zoghbi H."/>
            <person name="Zorilla S."/>
            <person name="Buck D."/>
            <person name="Reinhardt R."/>
            <person name="Poustka A."/>
            <person name="Rosenthal A."/>
            <person name="Lehrach H."/>
            <person name="Meindl A."/>
            <person name="Minx P.J."/>
            <person name="Hillier L.W."/>
            <person name="Willard H.F."/>
            <person name="Wilson R.K."/>
            <person name="Waterston R.H."/>
            <person name="Rice C.M."/>
            <person name="Vaudin M."/>
            <person name="Coulson A."/>
            <person name="Nelson D.L."/>
            <person name="Weinstock G."/>
            <person name="Sulston J.E."/>
            <person name="Durbin R.M."/>
            <person name="Hubbard T."/>
            <person name="Gibbs R.A."/>
            <person name="Beck S."/>
            <person name="Rogers J."/>
            <person name="Bentley D.R."/>
        </authorList>
    </citation>
    <scope>NUCLEOTIDE SEQUENCE [LARGE SCALE GENOMIC DNA]</scope>
</reference>
<reference key="5">
    <citation type="journal article" date="2004" name="Genome Res.">
        <title>The status, quality, and expansion of the NIH full-length cDNA project: the Mammalian Gene Collection (MGC).</title>
        <authorList>
            <consortium name="The MGC Project Team"/>
        </authorList>
    </citation>
    <scope>NUCLEOTIDE SEQUENCE [LARGE SCALE MRNA]</scope>
    <source>
        <tissue>Hypothalamus</tissue>
        <tissue>Placenta</tissue>
    </source>
</reference>
<reference key="6">
    <citation type="journal article" date="1998" name="Nature">
        <title>Eukaryotic ribosomes require initiation factors 1 and 1A to locate initiation codons.</title>
        <authorList>
            <person name="Pestova T.V."/>
            <person name="Borukhov S.I."/>
            <person name="Hellen C.U."/>
        </authorList>
    </citation>
    <scope>FUNCTION</scope>
</reference>
<reference key="7">
    <citation type="journal article" date="2003" name="Proc. Natl. Acad. Sci. U.S.A.">
        <title>Mapping the binding interface between human eukaryotic initiation factors 1A and 5B: a new interaction between old partners.</title>
        <authorList>
            <person name="Marintchev A."/>
            <person name="Kolupaeva V.G."/>
            <person name="Pestova T.V."/>
            <person name="Wagner G."/>
        </authorList>
    </citation>
    <scope>INTERACTION WITH EIF5B</scope>
</reference>
<reference key="8">
    <citation type="journal article" date="2011" name="BMC Syst. Biol.">
        <title>Initial characterization of the human central proteome.</title>
        <authorList>
            <person name="Burkard T.R."/>
            <person name="Planyavsky M."/>
            <person name="Kaupe I."/>
            <person name="Breitwieser F.P."/>
            <person name="Buerckstuemmer T."/>
            <person name="Bennett K.L."/>
            <person name="Superti-Furga G."/>
            <person name="Colinge J."/>
        </authorList>
    </citation>
    <scope>IDENTIFICATION BY MASS SPECTROMETRY [LARGE SCALE ANALYSIS]</scope>
</reference>
<reference key="9">
    <citation type="journal article" date="2013" name="Biochemistry">
        <title>The interaction between eukaryotic initiation factor 1A and eIF5 retains eIF1 within scanning preinitiation complexes.</title>
        <authorList>
            <person name="Luna R.E."/>
            <person name="Arthanari H."/>
            <person name="Hiraishi H."/>
            <person name="Akabayov B."/>
            <person name="Tang L."/>
            <person name="Cox C."/>
            <person name="Markus M.A."/>
            <person name="Luna L.E."/>
            <person name="Ikeda Y."/>
            <person name="Watanabe R."/>
            <person name="Bedoya E."/>
            <person name="Yu C."/>
            <person name="Alikhan S."/>
            <person name="Wagner G."/>
            <person name="Asano K."/>
        </authorList>
    </citation>
    <scope>FUNCTION</scope>
    <scope>INTERACTION WITH EIF5</scope>
</reference>
<reference key="10">
    <citation type="journal article" date="2014" name="PLoS ONE">
        <title>The eukaryotic elongation factor 1A is critical for genome replication of the paramyxovirus respiratory syncytial virus.</title>
        <authorList>
            <person name="Wei T."/>
            <person name="Li D."/>
            <person name="Marcial D."/>
            <person name="Khan M."/>
            <person name="Lin M.H."/>
            <person name="Snape N."/>
            <person name="Ghildyal R."/>
            <person name="Harrich D."/>
            <person name="Spann K."/>
        </authorList>
    </citation>
    <scope>INTERACTION WITH HRSV NUCLEOPROTEIN (MICROBIAL INFECTION)</scope>
</reference>
<reference key="11">
    <citation type="journal article" date="2018" name="Biochemistry">
        <title>Human eIF5 and eIF1A compete for binding to eIF5B.</title>
        <authorList>
            <person name="Lin K.Y."/>
            <person name="Nag N."/>
            <person name="Pestova T.V."/>
            <person name="Marintchev A."/>
        </authorList>
    </citation>
    <scope>INTERACTION WITH EIF5B</scope>
</reference>
<reference evidence="11" key="12">
    <citation type="journal article" date="2000" name="Mol. Cell">
        <title>The eIF1A solution structure reveals a large RNA-binding surface important for scanning function.</title>
        <authorList>
            <person name="Battiste J.L."/>
            <person name="Pestova T.V."/>
            <person name="Hellen C.U."/>
            <person name="Wagner G."/>
        </authorList>
    </citation>
    <scope>STRUCTURE BY NMR</scope>
</reference>
<reference evidence="12" key="13">
    <citation type="journal article" date="2022" name="Nature">
        <title>eIF5B and eIF1A reorient initiator tRNA to allow ribosomal subunit joining.</title>
        <authorList>
            <person name="Lapointe C.P."/>
            <person name="Grosely R."/>
            <person name="Sokabe M."/>
            <person name="Alvarado C."/>
            <person name="Wang J."/>
            <person name="Montabana E."/>
            <person name="Villa N."/>
            <person name="Shin B.S."/>
            <person name="Dever T.E."/>
            <person name="Fraser C.S."/>
            <person name="Fernandez I.S."/>
            <person name="Puglisi J.D."/>
        </authorList>
    </citation>
    <scope>STRUCTURE BY ELECTRON MICROSCOPY (3.4 ANGSTROMS) OF 24-113</scope>
    <scope>FUNCTION</scope>
    <scope>INTERACTION WITH EIF5B</scope>
</reference>
<feature type="chain" id="PRO_0000145101" description="Eukaryotic translation initiation factor 1A, X-chromosomal">
    <location>
        <begin position="1"/>
        <end position="144"/>
    </location>
</feature>
<feature type="domain" description="S1-like">
    <location>
        <begin position="22"/>
        <end position="96"/>
    </location>
</feature>
<feature type="region of interest" description="Disordered" evidence="1">
    <location>
        <begin position="1"/>
        <end position="26"/>
    </location>
</feature>
<feature type="region of interest" description="Disordered" evidence="1">
    <location>
        <begin position="114"/>
        <end position="144"/>
    </location>
</feature>
<feature type="compositionally biased region" description="Basic residues" evidence="1">
    <location>
        <begin position="1"/>
        <end position="15"/>
    </location>
</feature>
<feature type="compositionally biased region" description="Basic and acidic residues" evidence="1">
    <location>
        <begin position="16"/>
        <end position="26"/>
    </location>
</feature>
<feature type="compositionally biased region" description="Acidic residues" evidence="1">
    <location>
        <begin position="124"/>
        <end position="144"/>
    </location>
</feature>
<feature type="strand" evidence="13">
    <location>
        <begin position="7"/>
        <end position="12"/>
    </location>
</feature>
<feature type="strand" evidence="14">
    <location>
        <begin position="31"/>
        <end position="33"/>
    </location>
</feature>
<feature type="strand" evidence="15">
    <location>
        <begin position="34"/>
        <end position="37"/>
    </location>
</feature>
<feature type="strand" evidence="14">
    <location>
        <begin position="44"/>
        <end position="50"/>
    </location>
</feature>
<feature type="strand" evidence="14">
    <location>
        <begin position="52"/>
        <end position="54"/>
    </location>
</feature>
<feature type="strand" evidence="14">
    <location>
        <begin position="56"/>
        <end position="60"/>
    </location>
</feature>
<feature type="helix" evidence="15">
    <location>
        <begin position="63"/>
        <end position="65"/>
    </location>
</feature>
<feature type="strand" evidence="14">
    <location>
        <begin position="66"/>
        <end position="68"/>
    </location>
</feature>
<feature type="strand" evidence="14">
    <location>
        <begin position="76"/>
        <end position="80"/>
    </location>
</feature>
<feature type="turn" evidence="14">
    <location>
        <begin position="85"/>
        <end position="87"/>
    </location>
</feature>
<feature type="strand" evidence="14">
    <location>
        <begin position="89"/>
        <end position="94"/>
    </location>
</feature>
<feature type="helix" evidence="14">
    <location>
        <begin position="97"/>
        <end position="101"/>
    </location>
</feature>
<feature type="turn" evidence="14">
    <location>
        <begin position="102"/>
        <end position="106"/>
    </location>
</feature>
<feature type="strand" evidence="13">
    <location>
        <begin position="120"/>
        <end position="122"/>
    </location>
</feature>
<gene>
    <name type="primary">EIF1AX</name>
    <name type="synonym">EIF1A</name>
    <name type="synonym">EIF4C</name>
</gene>
<dbReference type="EMBL" id="L18960">
    <property type="protein sequence ID" value="AAA19812.1"/>
    <property type="molecule type" value="mRNA"/>
</dbReference>
<dbReference type="EMBL" id="AK312320">
    <property type="protein sequence ID" value="BAG35242.1"/>
    <property type="molecule type" value="mRNA"/>
</dbReference>
<dbReference type="EMBL" id="BT007064">
    <property type="protein sequence ID" value="AAP35727.1"/>
    <property type="molecule type" value="mRNA"/>
</dbReference>
<dbReference type="EMBL" id="AL732366">
    <property type="status" value="NOT_ANNOTATED_CDS"/>
    <property type="molecule type" value="Genomic_DNA"/>
</dbReference>
<dbReference type="EMBL" id="BC000793">
    <property type="protein sequence ID" value="AAH00793.1"/>
    <property type="molecule type" value="mRNA"/>
</dbReference>
<dbReference type="EMBL" id="BC067851">
    <property type="protein sequence ID" value="AAH67851.1"/>
    <property type="molecule type" value="mRNA"/>
</dbReference>
<dbReference type="CCDS" id="CCDS14196.1"/>
<dbReference type="PIR" id="C53045">
    <property type="entry name" value="C53045"/>
</dbReference>
<dbReference type="RefSeq" id="NP_001403.1">
    <property type="nucleotide sequence ID" value="NM_001412.4"/>
</dbReference>
<dbReference type="RefSeq" id="XP_016855198.1">
    <property type="nucleotide sequence ID" value="XM_016999709.1"/>
</dbReference>
<dbReference type="PDB" id="1D7Q">
    <property type="method" value="NMR"/>
    <property type="chains" value="A=2-144"/>
</dbReference>
<dbReference type="PDB" id="3ZJY">
    <property type="method" value="X-ray"/>
    <property type="resolution" value="3.60 A"/>
    <property type="chains" value="C=1-112"/>
</dbReference>
<dbReference type="PDB" id="4KZY">
    <property type="method" value="X-ray"/>
    <property type="resolution" value="7.01 A"/>
    <property type="chains" value="n=1-144"/>
</dbReference>
<dbReference type="PDB" id="4KZZ">
    <property type="method" value="X-ray"/>
    <property type="resolution" value="7.03 A"/>
    <property type="chains" value="n=1-144"/>
</dbReference>
<dbReference type="PDB" id="6YBW">
    <property type="method" value="EM"/>
    <property type="resolution" value="3.10 A"/>
    <property type="chains" value="q=1-144"/>
</dbReference>
<dbReference type="PDB" id="6ZMW">
    <property type="method" value="EM"/>
    <property type="resolution" value="3.70 A"/>
    <property type="chains" value="q=1-144"/>
</dbReference>
<dbReference type="PDB" id="6ZP4">
    <property type="method" value="EM"/>
    <property type="resolution" value="2.90 A"/>
    <property type="chains" value="G=1-144"/>
</dbReference>
<dbReference type="PDB" id="7A09">
    <property type="method" value="EM"/>
    <property type="resolution" value="3.50 A"/>
    <property type="chains" value="G=1-112"/>
</dbReference>
<dbReference type="PDB" id="7QP6">
    <property type="method" value="EM"/>
    <property type="resolution" value="4.70 A"/>
    <property type="chains" value="q=1-144"/>
</dbReference>
<dbReference type="PDB" id="7QP7">
    <property type="method" value="EM"/>
    <property type="resolution" value="3.70 A"/>
    <property type="chains" value="q=1-144"/>
</dbReference>
<dbReference type="PDB" id="7SYQ">
    <property type="method" value="EM"/>
    <property type="resolution" value="3.80 A"/>
    <property type="chains" value="A=1-144"/>
</dbReference>
<dbReference type="PDB" id="7SYR">
    <property type="method" value="EM"/>
    <property type="resolution" value="3.60 A"/>
    <property type="chains" value="A=1-144"/>
</dbReference>
<dbReference type="PDB" id="7SYS">
    <property type="method" value="EM"/>
    <property type="resolution" value="3.50 A"/>
    <property type="chains" value="A=1-144"/>
</dbReference>
<dbReference type="PDB" id="7SYV">
    <property type="method" value="EM"/>
    <property type="resolution" value="3.90 A"/>
    <property type="chains" value="A=1-144"/>
</dbReference>
<dbReference type="PDB" id="7SYW">
    <property type="method" value="EM"/>
    <property type="resolution" value="3.70 A"/>
    <property type="chains" value="A=1-144"/>
</dbReference>
<dbReference type="PDB" id="7SYX">
    <property type="method" value="EM"/>
    <property type="resolution" value="3.70 A"/>
    <property type="chains" value="A=1-144"/>
</dbReference>
<dbReference type="PDB" id="7TQL">
    <property type="method" value="EM"/>
    <property type="resolution" value="3.40 A"/>
    <property type="chains" value="4=24-113"/>
</dbReference>
<dbReference type="PDB" id="8OZ0">
    <property type="method" value="EM"/>
    <property type="resolution" value="3.50 A"/>
    <property type="chains" value="G=1-144"/>
</dbReference>
<dbReference type="PDB" id="8PJ1">
    <property type="method" value="EM"/>
    <property type="resolution" value="3.40 A"/>
    <property type="chains" value="q=1-144"/>
</dbReference>
<dbReference type="PDB" id="8PJ2">
    <property type="method" value="EM"/>
    <property type="resolution" value="3.40 A"/>
    <property type="chains" value="q=1-144"/>
</dbReference>
<dbReference type="PDB" id="8PJ3">
    <property type="method" value="EM"/>
    <property type="resolution" value="3.70 A"/>
    <property type="chains" value="q=1-144"/>
</dbReference>
<dbReference type="PDB" id="8PJ4">
    <property type="method" value="EM"/>
    <property type="resolution" value="3.20 A"/>
    <property type="chains" value="q=1-144"/>
</dbReference>
<dbReference type="PDB" id="8PJ5">
    <property type="method" value="EM"/>
    <property type="resolution" value="2.90 A"/>
    <property type="chains" value="q=1-144"/>
</dbReference>
<dbReference type="PDB" id="8PJ6">
    <property type="method" value="EM"/>
    <property type="resolution" value="2.90 A"/>
    <property type="chains" value="q=1-144"/>
</dbReference>
<dbReference type="PDB" id="8PPL">
    <property type="method" value="EM"/>
    <property type="resolution" value="2.65 A"/>
    <property type="chains" value="Iq=1-144"/>
</dbReference>
<dbReference type="PDBsum" id="1D7Q"/>
<dbReference type="PDBsum" id="3ZJY"/>
<dbReference type="PDBsum" id="4KZY"/>
<dbReference type="PDBsum" id="4KZZ"/>
<dbReference type="PDBsum" id="6YBW"/>
<dbReference type="PDBsum" id="6ZMW"/>
<dbReference type="PDBsum" id="6ZP4"/>
<dbReference type="PDBsum" id="7A09"/>
<dbReference type="PDBsum" id="7QP6"/>
<dbReference type="PDBsum" id="7QP7"/>
<dbReference type="PDBsum" id="7SYQ"/>
<dbReference type="PDBsum" id="7SYR"/>
<dbReference type="PDBsum" id="7SYS"/>
<dbReference type="PDBsum" id="7SYV"/>
<dbReference type="PDBsum" id="7SYW"/>
<dbReference type="PDBsum" id="7SYX"/>
<dbReference type="PDBsum" id="7TQL"/>
<dbReference type="PDBsum" id="8OZ0"/>
<dbReference type="PDBsum" id="8PJ1"/>
<dbReference type="PDBsum" id="8PJ2"/>
<dbReference type="PDBsum" id="8PJ3"/>
<dbReference type="PDBsum" id="8PJ4"/>
<dbReference type="PDBsum" id="8PJ5"/>
<dbReference type="PDBsum" id="8PJ6"/>
<dbReference type="PDBsum" id="8PPL"/>
<dbReference type="BMRB" id="P47813"/>
<dbReference type="EMDB" id="EMD-10775"/>
<dbReference type="EMDB" id="EMD-11302"/>
<dbReference type="EMDB" id="EMD-11335"/>
<dbReference type="EMDB" id="EMD-11602"/>
<dbReference type="EMDB" id="EMD-14113"/>
<dbReference type="EMDB" id="EMD-14114"/>
<dbReference type="EMDB" id="EMD-17297"/>
<dbReference type="EMDB" id="EMD-17696"/>
<dbReference type="EMDB" id="EMD-17697"/>
<dbReference type="EMDB" id="EMD-17698"/>
<dbReference type="EMDB" id="EMD-17699"/>
<dbReference type="EMDB" id="EMD-17700"/>
<dbReference type="EMDB" id="EMD-17701"/>
<dbReference type="EMDB" id="EMD-17805"/>
<dbReference type="EMDB" id="EMD-25537"/>
<dbReference type="EMDB" id="EMD-25538"/>
<dbReference type="EMDB" id="EMD-25539"/>
<dbReference type="EMDB" id="EMD-25542"/>
<dbReference type="EMDB" id="EMD-25543"/>
<dbReference type="EMDB" id="EMD-25544"/>
<dbReference type="EMDB" id="EMD-26067"/>
<dbReference type="SMR" id="P47813"/>
<dbReference type="BioGRID" id="108284">
    <property type="interactions" value="158"/>
</dbReference>
<dbReference type="CORUM" id="P47813"/>
<dbReference type="DIP" id="DIP-40995N"/>
<dbReference type="FunCoup" id="P47813">
    <property type="interactions" value="1760"/>
</dbReference>
<dbReference type="IntAct" id="P47813">
    <property type="interactions" value="49"/>
</dbReference>
<dbReference type="MINT" id="P47813"/>
<dbReference type="STRING" id="9606.ENSP00000368927"/>
<dbReference type="GlyGen" id="P47813">
    <property type="glycosylation" value="1 site, 1 O-linked glycan (1 site)"/>
</dbReference>
<dbReference type="iPTMnet" id="P47813"/>
<dbReference type="MetOSite" id="P47813"/>
<dbReference type="PhosphoSitePlus" id="P47813"/>
<dbReference type="SwissPalm" id="P47813"/>
<dbReference type="BioMuta" id="EIF1AX"/>
<dbReference type="DMDM" id="1352425"/>
<dbReference type="jPOST" id="P47813"/>
<dbReference type="MassIVE" id="P47813"/>
<dbReference type="PaxDb" id="9606-ENSP00000368927"/>
<dbReference type="PeptideAtlas" id="P47813"/>
<dbReference type="ProteomicsDB" id="55799"/>
<dbReference type="Pumba" id="P47813"/>
<dbReference type="TopDownProteomics" id="P47813"/>
<dbReference type="Antibodypedia" id="9819">
    <property type="antibodies" value="110 antibodies from 24 providers"/>
</dbReference>
<dbReference type="DNASU" id="1964"/>
<dbReference type="Ensembl" id="ENST00000379607.10">
    <property type="protein sequence ID" value="ENSP00000368927.5"/>
    <property type="gene ID" value="ENSG00000173674.11"/>
</dbReference>
<dbReference type="GeneID" id="1964"/>
<dbReference type="KEGG" id="hsa:1964"/>
<dbReference type="MANE-Select" id="ENST00000379607.10">
    <property type="protein sequence ID" value="ENSP00000368927.5"/>
    <property type="RefSeq nucleotide sequence ID" value="NM_001412.4"/>
    <property type="RefSeq protein sequence ID" value="NP_001403.1"/>
</dbReference>
<dbReference type="UCSC" id="uc004czt.4">
    <property type="organism name" value="human"/>
</dbReference>
<dbReference type="AGR" id="HGNC:3250"/>
<dbReference type="CTD" id="1964"/>
<dbReference type="DisGeNET" id="1964"/>
<dbReference type="GeneCards" id="EIF1AX"/>
<dbReference type="HGNC" id="HGNC:3250">
    <property type="gene designation" value="EIF1AX"/>
</dbReference>
<dbReference type="HPA" id="ENSG00000173674">
    <property type="expression patterns" value="Low tissue specificity"/>
</dbReference>
<dbReference type="MalaCards" id="EIF1AX"/>
<dbReference type="MIM" id="300186">
    <property type="type" value="gene"/>
</dbReference>
<dbReference type="neXtProt" id="NX_P47813"/>
<dbReference type="OpenTargets" id="ENSG00000173674"/>
<dbReference type="Orphanet" id="146">
    <property type="disease" value="Differentiated thyroid carcinoma"/>
</dbReference>
<dbReference type="PharmGKB" id="PA27684"/>
<dbReference type="VEuPathDB" id="HostDB:ENSG00000173674"/>
<dbReference type="eggNOG" id="KOG3403">
    <property type="taxonomic scope" value="Eukaryota"/>
</dbReference>
<dbReference type="GeneTree" id="ENSGT00390000008256"/>
<dbReference type="HOGENOM" id="CLU_109098_0_1_1"/>
<dbReference type="InParanoid" id="P47813"/>
<dbReference type="OMA" id="KMEDQEY"/>
<dbReference type="OrthoDB" id="274995at2759"/>
<dbReference type="PAN-GO" id="P47813">
    <property type="GO annotations" value="3 GO annotations based on evolutionary models"/>
</dbReference>
<dbReference type="PhylomeDB" id="P47813"/>
<dbReference type="TreeFam" id="TF350394"/>
<dbReference type="PathwayCommons" id="P47813"/>
<dbReference type="Reactome" id="R-HSA-156827">
    <property type="pathway name" value="L13a-mediated translational silencing of Ceruloplasmin expression"/>
</dbReference>
<dbReference type="Reactome" id="R-HSA-72649">
    <property type="pathway name" value="Translation initiation complex formation"/>
</dbReference>
<dbReference type="Reactome" id="R-HSA-72689">
    <property type="pathway name" value="Formation of a pool of free 40S subunits"/>
</dbReference>
<dbReference type="Reactome" id="R-HSA-72695">
    <property type="pathway name" value="Formation of the ternary complex, and subsequently, the 43S complex"/>
</dbReference>
<dbReference type="Reactome" id="R-HSA-72702">
    <property type="pathway name" value="Ribosomal scanning and start codon recognition"/>
</dbReference>
<dbReference type="Reactome" id="R-HSA-72706">
    <property type="pathway name" value="GTP hydrolysis and joining of the 60S ribosomal subunit"/>
</dbReference>
<dbReference type="SignaLink" id="P47813"/>
<dbReference type="SIGNOR" id="P47813"/>
<dbReference type="BioGRID-ORCS" id="1964">
    <property type="hits" value="429 hits in 732 CRISPR screens"/>
</dbReference>
<dbReference type="CD-CODE" id="91857CE7">
    <property type="entry name" value="Nucleolus"/>
</dbReference>
<dbReference type="ChiTaRS" id="EIF1AX">
    <property type="organism name" value="human"/>
</dbReference>
<dbReference type="EvolutionaryTrace" id="P47813"/>
<dbReference type="GeneWiki" id="EIF1AX"/>
<dbReference type="Pharos" id="P47813">
    <property type="development level" value="Tbio"/>
</dbReference>
<dbReference type="PRO" id="PR:P47813"/>
<dbReference type="Proteomes" id="UP000005640">
    <property type="component" value="Chromosome X"/>
</dbReference>
<dbReference type="RNAct" id="P47813">
    <property type="molecule type" value="protein"/>
</dbReference>
<dbReference type="Bgee" id="ENSG00000173674">
    <property type="expression patterns" value="Expressed in endothelial cell and 208 other cell types or tissues"/>
</dbReference>
<dbReference type="ExpressionAtlas" id="P47813">
    <property type="expression patterns" value="baseline and differential"/>
</dbReference>
<dbReference type="GO" id="GO:0005737">
    <property type="term" value="C:cytoplasm"/>
    <property type="evidence" value="ECO:0000318"/>
    <property type="project" value="GO_Central"/>
</dbReference>
<dbReference type="GO" id="GO:0005829">
    <property type="term" value="C:cytosol"/>
    <property type="evidence" value="ECO:0000304"/>
    <property type="project" value="Reactome"/>
</dbReference>
<dbReference type="GO" id="GO:0016282">
    <property type="term" value="C:eukaryotic 43S preinitiation complex"/>
    <property type="evidence" value="ECO:0000314"/>
    <property type="project" value="UniProtKB"/>
</dbReference>
<dbReference type="GO" id="GO:0033290">
    <property type="term" value="C:eukaryotic 48S preinitiation complex"/>
    <property type="evidence" value="ECO:0000314"/>
    <property type="project" value="UniProtKB"/>
</dbReference>
<dbReference type="GO" id="GO:0043614">
    <property type="term" value="C:multi-eIF complex"/>
    <property type="evidence" value="ECO:0000314"/>
    <property type="project" value="UniProtKB"/>
</dbReference>
<dbReference type="GO" id="GO:0045202">
    <property type="term" value="C:synapse"/>
    <property type="evidence" value="ECO:0007669"/>
    <property type="project" value="Ensembl"/>
</dbReference>
<dbReference type="GO" id="GO:0003723">
    <property type="term" value="F:RNA binding"/>
    <property type="evidence" value="ECO:0007005"/>
    <property type="project" value="UniProtKB"/>
</dbReference>
<dbReference type="GO" id="GO:0008135">
    <property type="term" value="F:translation factor activity, RNA binding"/>
    <property type="evidence" value="ECO:0000304"/>
    <property type="project" value="ProtInc"/>
</dbReference>
<dbReference type="GO" id="GO:0003743">
    <property type="term" value="F:translation initiation factor activity"/>
    <property type="evidence" value="ECO:0000318"/>
    <property type="project" value="GO_Central"/>
</dbReference>
<dbReference type="GO" id="GO:0000049">
    <property type="term" value="F:tRNA binding"/>
    <property type="evidence" value="ECO:0007669"/>
    <property type="project" value="UniProtKB-KW"/>
</dbReference>
<dbReference type="GO" id="GO:0042255">
    <property type="term" value="P:ribosome assembly"/>
    <property type="evidence" value="ECO:0000314"/>
    <property type="project" value="UniProtKB"/>
</dbReference>
<dbReference type="GO" id="GO:0006413">
    <property type="term" value="P:translational initiation"/>
    <property type="evidence" value="ECO:0000314"/>
    <property type="project" value="UniProtKB"/>
</dbReference>
<dbReference type="CDD" id="cd05793">
    <property type="entry name" value="S1_IF1A"/>
    <property type="match status" value="1"/>
</dbReference>
<dbReference type="DisProt" id="DP00903"/>
<dbReference type="FunFam" id="2.40.50.140:FF:000071">
    <property type="entry name" value="Eukaryotic translation initiation factor 1A"/>
    <property type="match status" value="1"/>
</dbReference>
<dbReference type="Gene3D" id="2.40.50.140">
    <property type="entry name" value="Nucleic acid-binding proteins"/>
    <property type="match status" value="1"/>
</dbReference>
<dbReference type="HAMAP" id="MF_00216">
    <property type="entry name" value="aIF_1A"/>
    <property type="match status" value="1"/>
</dbReference>
<dbReference type="InterPro" id="IPR012340">
    <property type="entry name" value="NA-bd_OB-fold"/>
</dbReference>
<dbReference type="InterPro" id="IPR006196">
    <property type="entry name" value="RNA-binding_domain_S1_IF1"/>
</dbReference>
<dbReference type="InterPro" id="IPR001253">
    <property type="entry name" value="TIF_eIF-1A"/>
</dbReference>
<dbReference type="InterPro" id="IPR018104">
    <property type="entry name" value="TIF_eIF-1A_CS"/>
</dbReference>
<dbReference type="NCBIfam" id="TIGR00523">
    <property type="entry name" value="eIF-1A"/>
    <property type="match status" value="1"/>
</dbReference>
<dbReference type="PANTHER" id="PTHR21668">
    <property type="entry name" value="EIF-1A"/>
    <property type="match status" value="1"/>
</dbReference>
<dbReference type="Pfam" id="PF01176">
    <property type="entry name" value="eIF-1a"/>
    <property type="match status" value="1"/>
</dbReference>
<dbReference type="SMART" id="SM00652">
    <property type="entry name" value="eIF1a"/>
    <property type="match status" value="1"/>
</dbReference>
<dbReference type="SUPFAM" id="SSF50249">
    <property type="entry name" value="Nucleic acid-binding proteins"/>
    <property type="match status" value="1"/>
</dbReference>
<dbReference type="PROSITE" id="PS01262">
    <property type="entry name" value="IF1A"/>
    <property type="match status" value="1"/>
</dbReference>
<dbReference type="PROSITE" id="PS50832">
    <property type="entry name" value="S1_IF1_TYPE"/>
    <property type="match status" value="1"/>
</dbReference>
<proteinExistence type="evidence at protein level"/>
<name>IF1AX_HUMAN</name>
<evidence type="ECO:0000256" key="1">
    <source>
        <dbReference type="SAM" id="MobiDB-lite"/>
    </source>
</evidence>
<evidence type="ECO:0000269" key="2">
    <source>
    </source>
</evidence>
<evidence type="ECO:0000269" key="3">
    <source>
    </source>
</evidence>
<evidence type="ECO:0000269" key="4">
    <source>
    </source>
</evidence>
<evidence type="ECO:0000269" key="5">
    <source>
    </source>
</evidence>
<evidence type="ECO:0000269" key="6">
    <source>
    </source>
</evidence>
<evidence type="ECO:0000269" key="7">
    <source>
    </source>
</evidence>
<evidence type="ECO:0000303" key="8">
    <source>
    </source>
</evidence>
<evidence type="ECO:0000303" key="9">
    <source>
    </source>
</evidence>
<evidence type="ECO:0000305" key="10"/>
<evidence type="ECO:0000312" key="11">
    <source>
        <dbReference type="PDB" id="1D7Q"/>
    </source>
</evidence>
<evidence type="ECO:0000312" key="12">
    <source>
        <dbReference type="PDB" id="7TQL"/>
    </source>
</evidence>
<evidence type="ECO:0007829" key="13">
    <source>
        <dbReference type="PDB" id="1D7Q"/>
    </source>
</evidence>
<evidence type="ECO:0007829" key="14">
    <source>
        <dbReference type="PDB" id="6YBW"/>
    </source>
</evidence>
<evidence type="ECO:0007829" key="15">
    <source>
        <dbReference type="PDB" id="7TQL"/>
    </source>
</evidence>
<sequence>MPKNKGKGGKNRRRGKNENESEKRELVFKEDGQEYAQVIKMLGNGRLEAMCFDGVKRLCHIRGKLRKKVWINTSDIILVGLRDYQDNKADVILKYNADEARSLKAYGELPEHAKINETDTFGPGDDDEIQFDDIGDDDEDIDDI</sequence>
<comment type="function">
    <text evidence="3 6 7">Component of the 43S pre-initiation complex (43S PIC), which binds to the mRNA cap-proximal region, scans mRNA 5'-untranslated region, and locates the initiation codon (PubMed:9732867). This protein enhances formation of the cap-proximal complex (PubMed:9732867). Together with EIF1, facilitates scanning, start codon recognition, promotion of the assembly of 48S complex at the initiation codon (43S PIC becomes 48S PIC after the start codon is reached), and dissociation of aberrant complexes (PubMed:9732867). After start codon location, together with EIF5B orients the initiator methionine-tRNA in a conformation that allows 60S ribosomal subunit joining to form the 80S initiation complex (PubMed:35732735). Is released after 80S initiation complex formation, just after GTP hydrolysis by EIF5B, and before release of EIF5B (PubMed:35732735). Its globular part is located in the A site of the 40S ribosomal subunit (PubMed:35732735). Its interaction with EIF5 during scanning contribute to the maintenance of EIF1 within the open 43S PIC (PubMed:24319994). In contrast to yeast orthologs, does not bind EIF1 (PubMed:24319994).</text>
</comment>
<comment type="subunit">
    <text evidence="2 3 5 6">Component of the 43S pre-initiation complex (43S PIC), which is composed of the 40S ribosomal subunit, EIF1, eIF1A (EIF1AX), eIF3 complex, EIF5 and eIF2-GTP-initiator tRNA complex (eIF2 ternary complex). Interacts with EIF5; this interaction contributes to the maintenance of EIF1 within the open 43S PIC (PubMed:24319994). Interacts through its C-terminal domain (CTD) with the CTD of EIF5B; from the location of the start codon by the 43S complex until the formation of the 80S complex (PubMed:12569173, PubMed:30211544, PubMed:35732735).</text>
</comment>
<comment type="subunit">
    <text evidence="4">(Microbial infection) Interacts with human respiratory syncytial virus (HRSV) nucleoprotein; this interaction recruits EIF1AX to the viral replication complex to facilitate viral genomic RNA synthesis and virus production.</text>
</comment>
<comment type="interaction">
    <interactant intactId="EBI-1045377">
        <id>P47813</id>
    </interactant>
    <interactant intactId="EBI-366617">
        <id>Q14152</id>
        <label>EIF3A</label>
    </interactant>
    <organismsDiffer>false</organismsDiffer>
    <experiments>2</experiments>
</comment>
<comment type="interaction">
    <interactant intactId="EBI-1045377">
        <id>P47813</id>
    </interactant>
    <interactant intactId="EBI-353741">
        <id>Q99613</id>
        <label>EIF3C</label>
    </interactant>
    <organismsDiffer>false</organismsDiffer>
    <experiments>2</experiments>
</comment>
<comment type="interaction">
    <interactant intactId="EBI-1045377">
        <id>P47813</id>
    </interactant>
    <interactant intactId="EBI-747310">
        <id>O94829</id>
        <label>IPO13</label>
    </interactant>
    <organismsDiffer>false</organismsDiffer>
    <experiments>14</experiments>
</comment>
<comment type="interaction">
    <interactant intactId="EBI-1045377">
        <id>P47813</id>
    </interactant>
    <interactant intactId="EBI-10188956">
        <id>O75679</id>
        <label>RFPL3</label>
    </interactant>
    <organismsDiffer>false</organismsDiffer>
    <experiments>3</experiments>
</comment>
<comment type="subcellular location">
    <subcellularLocation>
        <location evidence="10">Cytoplasm</location>
    </subcellularLocation>
</comment>
<comment type="similarity">
    <text evidence="10">Belongs to the eIF-1A family.</text>
</comment>
<accession>P47813</accession>
<accession>B2R5U5</accession>
<accession>Q0VGC2</accession>
<accession>Q5JPS5</accession>
<accession>Q5JPS6</accession>
<protein>
    <recommendedName>
        <fullName>Eukaryotic translation initiation factor 1A, X-chromosomal</fullName>
        <shortName>eIF-1A X isoform</shortName>
        <shortName evidence="8 9">eIF1A X isoform</shortName>
    </recommendedName>
    <alternativeName>
        <fullName>Eukaryotic translation initiation factor 4C</fullName>
        <shortName>eIF-4C</shortName>
    </alternativeName>
</protein>
<keyword id="KW-0002">3D-structure</keyword>
<keyword id="KW-0963">Cytoplasm</keyword>
<keyword id="KW-0945">Host-virus interaction</keyword>
<keyword id="KW-0396">Initiation factor</keyword>
<keyword id="KW-0648">Protein biosynthesis</keyword>
<keyword id="KW-1267">Proteomics identification</keyword>
<keyword id="KW-1185">Reference proteome</keyword>
<keyword id="KW-0694">RNA-binding</keyword>
<keyword id="KW-0820">tRNA-binding</keyword>